<organism>
    <name type="scientific">Escherichia coli (strain ATCC 8739 / DSM 1576 / NBRC 3972 / NCIMB 8545 / WDCM 00012 / Crooks)</name>
    <dbReference type="NCBI Taxonomy" id="481805"/>
    <lineage>
        <taxon>Bacteria</taxon>
        <taxon>Pseudomonadati</taxon>
        <taxon>Pseudomonadota</taxon>
        <taxon>Gammaproteobacteria</taxon>
        <taxon>Enterobacterales</taxon>
        <taxon>Enterobacteriaceae</taxon>
        <taxon>Escherichia</taxon>
    </lineage>
</organism>
<name>AAS_ECOLC</name>
<sequence>MLFSFFRNLCRVLYRVRVTGDTQALKGERVLITPNHVSFIDGILLGLFLPVRPVFAVYTSISQQWYMRWLKSFIDFVPLDPTQPMAIKHLVRLVEQGRPVVIFPEGRITTTGSLMKIYDGAGFVAAKSGATVIPVRIEGAELTHFSRLKGLVKRRLFPQITLHILPPTQVAMPDAPRARDRRKIAGEMLHQIMMEARMAVRPRETLYESLLSAMYRFGAGKKCVEDVNFTPDSYRKLLTKTLFVGRILEKYSVEGERIGLMLPNAGISAAVIFGAIARRRIPAMMNYTAGVKGLTSAITAAEIKTIFTSRQFLDKGKLWHLPEQLTQVRWVYLEDLKADVTTADKVWIFAHLLMPRLAQVKQQPEEEALILFTSGSEGHPKGVVHSHKSILANVEQIKTIADFTTNDRFMSALPLFHSFGLTVGLFTPLLTGAEVFLYPSPLHYRIVPELVYDRSCTVLFGTSTFLGHYARFANPYDFYRLRYVVAGAEKLQESTKQLWQDKFGLRILEGYGVTECAPVVSINVPMAAKPGTVGRILPGMDARLLSVPGIEEGGRLQLKGPNIMNGYLRVEKPGVLEVPTAENVRGEMERGWYDTGDIVRFDEQGFVQIQGRAKRFAKIAGEMVSLEMVEQLALGVSPDKVHATAIKSDASKGEALVLFTTDNELTRDKLQQYAREHGVPELAVPRDIRYLKQMPLLGSGKPDFVTLKSWVDEAEQHDE</sequence>
<keyword id="KW-0012">Acyltransferase</keyword>
<keyword id="KW-0067">ATP-binding</keyword>
<keyword id="KW-0997">Cell inner membrane</keyword>
<keyword id="KW-1003">Cell membrane</keyword>
<keyword id="KW-0436">Ligase</keyword>
<keyword id="KW-0472">Membrane</keyword>
<keyword id="KW-0511">Multifunctional enzyme</keyword>
<keyword id="KW-0547">Nucleotide-binding</keyword>
<keyword id="KW-0808">Transferase</keyword>
<keyword id="KW-0812">Transmembrane</keyword>
<keyword id="KW-1133">Transmembrane helix</keyword>
<accession>B1IU08</accession>
<protein>
    <recommendedName>
        <fullName evidence="1">Bifunctional protein Aas</fullName>
    </recommendedName>
    <domain>
        <recommendedName>
            <fullName evidence="1">2-acylglycerophosphoethanolamine acyltransferase</fullName>
            <ecNumber evidence="1">2.3.1.40</ecNumber>
        </recommendedName>
        <alternativeName>
            <fullName evidence="1">2-acyl-GPE acyltransferase</fullName>
        </alternativeName>
        <alternativeName>
            <fullName evidence="1">Acyl-[acyl-carrier-protein]--phospholipid O-acyltransferase</fullName>
        </alternativeName>
    </domain>
    <domain>
        <recommendedName>
            <fullName evidence="1">Acyl-[acyl-carrier-protein] synthetase</fullName>
            <ecNumber evidence="1">6.2.1.20</ecNumber>
        </recommendedName>
        <alternativeName>
            <fullName evidence="1">Acyl-ACP synthetase</fullName>
        </alternativeName>
        <alternativeName>
            <fullName evidence="1">Long-chain-fatty-acid--[acyl-carrier-protein] ligase</fullName>
        </alternativeName>
    </domain>
</protein>
<reference key="1">
    <citation type="submission" date="2008-02" db="EMBL/GenBank/DDBJ databases">
        <title>Complete sequence of Escherichia coli C str. ATCC 8739.</title>
        <authorList>
            <person name="Copeland A."/>
            <person name="Lucas S."/>
            <person name="Lapidus A."/>
            <person name="Glavina del Rio T."/>
            <person name="Dalin E."/>
            <person name="Tice H."/>
            <person name="Bruce D."/>
            <person name="Goodwin L."/>
            <person name="Pitluck S."/>
            <person name="Kiss H."/>
            <person name="Brettin T."/>
            <person name="Detter J.C."/>
            <person name="Han C."/>
            <person name="Kuske C.R."/>
            <person name="Schmutz J."/>
            <person name="Larimer F."/>
            <person name="Land M."/>
            <person name="Hauser L."/>
            <person name="Kyrpides N."/>
            <person name="Mikhailova N."/>
            <person name="Ingram L."/>
            <person name="Richardson P."/>
        </authorList>
    </citation>
    <scope>NUCLEOTIDE SEQUENCE [LARGE SCALE GENOMIC DNA]</scope>
    <source>
        <strain>ATCC 8739 / DSM 1576 / NBRC 3972 / NCIMB 8545 / WDCM 00012 / Crooks</strain>
    </source>
</reference>
<gene>
    <name evidence="1" type="primary">aas</name>
    <name type="ordered locus">EcolC_0879</name>
</gene>
<proteinExistence type="inferred from homology"/>
<dbReference type="EC" id="2.3.1.40" evidence="1"/>
<dbReference type="EC" id="6.2.1.20" evidence="1"/>
<dbReference type="EMBL" id="CP000946">
    <property type="protein sequence ID" value="ACA76548.1"/>
    <property type="molecule type" value="Genomic_DNA"/>
</dbReference>
<dbReference type="RefSeq" id="WP_000899049.1">
    <property type="nucleotide sequence ID" value="NZ_MTFT01000004.1"/>
</dbReference>
<dbReference type="SMR" id="B1IU08"/>
<dbReference type="GeneID" id="75203772"/>
<dbReference type="KEGG" id="ecl:EcolC_0879"/>
<dbReference type="HOGENOM" id="CLU_000022_59_8_6"/>
<dbReference type="GO" id="GO:0005886">
    <property type="term" value="C:plasma membrane"/>
    <property type="evidence" value="ECO:0007669"/>
    <property type="project" value="UniProtKB-SubCell"/>
</dbReference>
<dbReference type="GO" id="GO:0008779">
    <property type="term" value="F:acyl-[acyl-carrier-protein]-phospholipid O-acyltransferase activity"/>
    <property type="evidence" value="ECO:0007669"/>
    <property type="project" value="UniProtKB-UniRule"/>
</dbReference>
<dbReference type="GO" id="GO:0005524">
    <property type="term" value="F:ATP binding"/>
    <property type="evidence" value="ECO:0007669"/>
    <property type="project" value="UniProtKB-KW"/>
</dbReference>
<dbReference type="GO" id="GO:0008922">
    <property type="term" value="F:long-chain fatty acid [acyl-carrier-protein] ligase activity"/>
    <property type="evidence" value="ECO:0007669"/>
    <property type="project" value="UniProtKB-UniRule"/>
</dbReference>
<dbReference type="GO" id="GO:0031956">
    <property type="term" value="F:medium-chain fatty acid-CoA ligase activity"/>
    <property type="evidence" value="ECO:0007669"/>
    <property type="project" value="TreeGrafter"/>
</dbReference>
<dbReference type="GO" id="GO:0006631">
    <property type="term" value="P:fatty acid metabolic process"/>
    <property type="evidence" value="ECO:0007669"/>
    <property type="project" value="InterPro"/>
</dbReference>
<dbReference type="GO" id="GO:0008654">
    <property type="term" value="P:phospholipid biosynthetic process"/>
    <property type="evidence" value="ECO:0007669"/>
    <property type="project" value="InterPro"/>
</dbReference>
<dbReference type="CDD" id="cd05909">
    <property type="entry name" value="AAS_C"/>
    <property type="match status" value="1"/>
</dbReference>
<dbReference type="CDD" id="cd07989">
    <property type="entry name" value="LPLAT_AGPAT-like"/>
    <property type="match status" value="1"/>
</dbReference>
<dbReference type="FunFam" id="3.30.300.30:FF:000009">
    <property type="entry name" value="Bifunctional protein Aas"/>
    <property type="match status" value="1"/>
</dbReference>
<dbReference type="FunFam" id="3.40.50.12780:FF:000009">
    <property type="entry name" value="Bifunctional protein Aas"/>
    <property type="match status" value="1"/>
</dbReference>
<dbReference type="Gene3D" id="3.30.300.30">
    <property type="match status" value="1"/>
</dbReference>
<dbReference type="Gene3D" id="3.40.50.12780">
    <property type="entry name" value="N-terminal domain of ligase-like"/>
    <property type="match status" value="1"/>
</dbReference>
<dbReference type="HAMAP" id="MF_01162">
    <property type="entry name" value="Aas"/>
    <property type="match status" value="1"/>
</dbReference>
<dbReference type="InterPro" id="IPR023775">
    <property type="entry name" value="Aas"/>
</dbReference>
<dbReference type="InterPro" id="IPR045851">
    <property type="entry name" value="AMP-bd_C_sf"/>
</dbReference>
<dbReference type="InterPro" id="IPR020845">
    <property type="entry name" value="AMP-binding_CS"/>
</dbReference>
<dbReference type="InterPro" id="IPR000873">
    <property type="entry name" value="AMP-dep_synth/lig_dom"/>
</dbReference>
<dbReference type="InterPro" id="IPR042099">
    <property type="entry name" value="ANL_N_sf"/>
</dbReference>
<dbReference type="InterPro" id="IPR002123">
    <property type="entry name" value="Plipid/glycerol_acylTrfase"/>
</dbReference>
<dbReference type="NCBIfam" id="NF005959">
    <property type="entry name" value="PRK08043.1"/>
    <property type="match status" value="1"/>
</dbReference>
<dbReference type="PANTHER" id="PTHR43201">
    <property type="entry name" value="ACYL-COA SYNTHETASE"/>
    <property type="match status" value="1"/>
</dbReference>
<dbReference type="PANTHER" id="PTHR43201:SF8">
    <property type="entry name" value="ACYL-COA SYNTHETASE FAMILY MEMBER 3"/>
    <property type="match status" value="1"/>
</dbReference>
<dbReference type="Pfam" id="PF01553">
    <property type="entry name" value="Acyltransferase"/>
    <property type="match status" value="1"/>
</dbReference>
<dbReference type="Pfam" id="PF00501">
    <property type="entry name" value="AMP-binding"/>
    <property type="match status" value="1"/>
</dbReference>
<dbReference type="SMART" id="SM00563">
    <property type="entry name" value="PlsC"/>
    <property type="match status" value="1"/>
</dbReference>
<dbReference type="SUPFAM" id="SSF56801">
    <property type="entry name" value="Acetyl-CoA synthetase-like"/>
    <property type="match status" value="1"/>
</dbReference>
<dbReference type="SUPFAM" id="SSF69593">
    <property type="entry name" value="Glycerol-3-phosphate (1)-acyltransferase"/>
    <property type="match status" value="1"/>
</dbReference>
<dbReference type="PROSITE" id="PS00455">
    <property type="entry name" value="AMP_BINDING"/>
    <property type="match status" value="1"/>
</dbReference>
<feature type="chain" id="PRO_1000085376" description="Bifunctional protein Aas">
    <location>
        <begin position="1"/>
        <end position="719"/>
    </location>
</feature>
<feature type="transmembrane region" description="Helical" evidence="1">
    <location>
        <begin position="258"/>
        <end position="277"/>
    </location>
</feature>
<feature type="transmembrane region" description="Helical" evidence="1">
    <location>
        <begin position="409"/>
        <end position="433"/>
    </location>
</feature>
<feature type="region of interest" description="Acyltransferase">
    <location>
        <begin position="15"/>
        <end position="138"/>
    </location>
</feature>
<feature type="region of interest" description="AMP-binding">
    <location>
        <begin position="233"/>
        <end position="646"/>
    </location>
</feature>
<feature type="active site" evidence="1">
    <location>
        <position position="36"/>
    </location>
</feature>
<evidence type="ECO:0000255" key="1">
    <source>
        <dbReference type="HAMAP-Rule" id="MF_01162"/>
    </source>
</evidence>
<comment type="function">
    <text evidence="1">Plays a role in lysophospholipid acylation. Transfers fatty acids to the 1-position via an enzyme-bound acyl-ACP intermediate in the presence of ATP and magnesium. Its physiological function is to regenerate phosphatidylethanolamine from 2-acyl-glycero-3-phosphoethanolamine (2-acyl-GPE) formed by transacylation reactions or degradation by phospholipase A1.</text>
</comment>
<comment type="catalytic activity">
    <reaction evidence="1">
        <text>a 2-acyl-sn-glycero-3-phosphoethanolamine + a fatty acyl-[ACP] = a 1,2-diacyl-sn-glycero-3-phosphoethanolamine + holo-[ACP]</text>
        <dbReference type="Rhea" id="RHEA:10304"/>
        <dbReference type="Rhea" id="RHEA-COMP:9685"/>
        <dbReference type="Rhea" id="RHEA-COMP:14125"/>
        <dbReference type="ChEBI" id="CHEBI:64479"/>
        <dbReference type="ChEBI" id="CHEBI:64612"/>
        <dbReference type="ChEBI" id="CHEBI:65213"/>
        <dbReference type="ChEBI" id="CHEBI:138651"/>
        <dbReference type="EC" id="2.3.1.40"/>
    </reaction>
</comment>
<comment type="catalytic activity">
    <reaction evidence="1">
        <text>a long-chain fatty acid + holo-[ACP] + ATP = a long-chain fatty acyl-[ACP] + AMP + diphosphate</text>
        <dbReference type="Rhea" id="RHEA:45588"/>
        <dbReference type="Rhea" id="RHEA-COMP:9685"/>
        <dbReference type="Rhea" id="RHEA-COMP:12682"/>
        <dbReference type="ChEBI" id="CHEBI:30616"/>
        <dbReference type="ChEBI" id="CHEBI:33019"/>
        <dbReference type="ChEBI" id="CHEBI:57560"/>
        <dbReference type="ChEBI" id="CHEBI:64479"/>
        <dbReference type="ChEBI" id="CHEBI:133243"/>
        <dbReference type="ChEBI" id="CHEBI:456215"/>
        <dbReference type="EC" id="6.2.1.20"/>
    </reaction>
</comment>
<comment type="subcellular location">
    <subcellularLocation>
        <location evidence="1">Cell inner membrane</location>
        <topology evidence="1">Multi-pass membrane protein</topology>
    </subcellularLocation>
</comment>
<comment type="similarity">
    <text evidence="1">In the N-terminal section; belongs to the 2-acyl-GPE acetyltransferase family.</text>
</comment>
<comment type="similarity">
    <text evidence="1">In the C-terminal section; belongs to the ATP-dependent AMP-binding enzyme family.</text>
</comment>